<name>PURA_PYRSS</name>
<organism>
    <name type="scientific">Pyrococcus sp. (strain ST700)</name>
    <dbReference type="NCBI Taxonomy" id="69015"/>
    <lineage>
        <taxon>Archaea</taxon>
        <taxon>Methanobacteriati</taxon>
        <taxon>Methanobacteriota</taxon>
        <taxon>Thermococci</taxon>
        <taxon>Thermococcales</taxon>
        <taxon>Thermococcaceae</taxon>
        <taxon>Pyrococcus</taxon>
    </lineage>
</organism>
<keyword id="KW-0963">Cytoplasm</keyword>
<keyword id="KW-0342">GTP-binding</keyword>
<keyword id="KW-0436">Ligase</keyword>
<keyword id="KW-0460">Magnesium</keyword>
<keyword id="KW-0479">Metal-binding</keyword>
<keyword id="KW-0547">Nucleotide-binding</keyword>
<keyword id="KW-0658">Purine biosynthesis</keyword>
<comment type="function">
    <text evidence="2">Plays an important role in the de novo pathway of purine nucleotide biosynthesis. Catalyzes the first committed step in the biosynthesis of AMP from IMP.</text>
</comment>
<comment type="catalytic activity">
    <reaction evidence="1">
        <text>IMP + L-aspartate + GTP = N(6)-(1,2-dicarboxyethyl)-AMP + GDP + phosphate + 2 H(+)</text>
        <dbReference type="Rhea" id="RHEA:15753"/>
        <dbReference type="ChEBI" id="CHEBI:15378"/>
        <dbReference type="ChEBI" id="CHEBI:29991"/>
        <dbReference type="ChEBI" id="CHEBI:37565"/>
        <dbReference type="ChEBI" id="CHEBI:43474"/>
        <dbReference type="ChEBI" id="CHEBI:57567"/>
        <dbReference type="ChEBI" id="CHEBI:58053"/>
        <dbReference type="ChEBI" id="CHEBI:58189"/>
        <dbReference type="EC" id="6.3.4.4"/>
    </reaction>
</comment>
<comment type="cofactor">
    <cofactor evidence="1">
        <name>Mg(2+)</name>
        <dbReference type="ChEBI" id="CHEBI:18420"/>
    </cofactor>
    <text evidence="1">Binds 1 Mg(2+) ion per subunit.</text>
</comment>
<comment type="pathway">
    <text evidence="1">Purine metabolism; AMP biosynthesis via de novo pathway; AMP from IMP: step 1/2.</text>
</comment>
<comment type="subunit">
    <text evidence="1">Homodimer.</text>
</comment>
<comment type="subcellular location">
    <subcellularLocation>
        <location evidence="1">Cytoplasm</location>
    </subcellularLocation>
</comment>
<comment type="similarity">
    <text evidence="1">Belongs to the adenylosuccinate synthetase family.</text>
</comment>
<gene>
    <name evidence="1" type="primary">purA</name>
</gene>
<feature type="chain" id="PRO_0000095279" description="Adenylosuccinate synthetase">
    <location>
        <begin position="1"/>
        <end position="339"/>
    </location>
</feature>
<feature type="active site" description="Proton acceptor" evidence="1">
    <location>
        <position position="13"/>
    </location>
</feature>
<feature type="active site" description="Proton donor" evidence="1">
    <location>
        <position position="43"/>
    </location>
</feature>
<feature type="binding site" evidence="1">
    <location>
        <begin position="12"/>
        <end position="18"/>
    </location>
    <ligand>
        <name>GTP</name>
        <dbReference type="ChEBI" id="CHEBI:37565"/>
    </ligand>
</feature>
<feature type="binding site" description="in other chain" evidence="1">
    <location>
        <begin position="13"/>
        <end position="16"/>
    </location>
    <ligand>
        <name>IMP</name>
        <dbReference type="ChEBI" id="CHEBI:58053"/>
        <note>ligand shared between dimeric partners</note>
    </ligand>
</feature>
<feature type="binding site" evidence="1">
    <location>
        <position position="13"/>
    </location>
    <ligand>
        <name>Mg(2+)</name>
        <dbReference type="ChEBI" id="CHEBI:18420"/>
    </ligand>
</feature>
<feature type="binding site" description="in other chain" evidence="1">
    <location>
        <begin position="40"/>
        <end position="43"/>
    </location>
    <ligand>
        <name>IMP</name>
        <dbReference type="ChEBI" id="CHEBI:58053"/>
        <note>ligand shared between dimeric partners</note>
    </ligand>
</feature>
<feature type="binding site" evidence="1">
    <location>
        <begin position="42"/>
        <end position="44"/>
    </location>
    <ligand>
        <name>GTP</name>
        <dbReference type="ChEBI" id="CHEBI:37565"/>
    </ligand>
</feature>
<feature type="binding site" evidence="1">
    <location>
        <position position="42"/>
    </location>
    <ligand>
        <name>Mg(2+)</name>
        <dbReference type="ChEBI" id="CHEBI:18420"/>
    </ligand>
</feature>
<feature type="binding site" description="in other chain" evidence="1">
    <location>
        <position position="127"/>
    </location>
    <ligand>
        <name>IMP</name>
        <dbReference type="ChEBI" id="CHEBI:58053"/>
        <note>ligand shared between dimeric partners</note>
    </ligand>
</feature>
<feature type="binding site" evidence="1">
    <location>
        <position position="141"/>
    </location>
    <ligand>
        <name>IMP</name>
        <dbReference type="ChEBI" id="CHEBI:58053"/>
        <note>ligand shared between dimeric partners</note>
    </ligand>
</feature>
<feature type="binding site" description="in other chain" evidence="1">
    <location>
        <position position="179"/>
    </location>
    <ligand>
        <name>IMP</name>
        <dbReference type="ChEBI" id="CHEBI:58053"/>
        <note>ligand shared between dimeric partners</note>
    </ligand>
</feature>
<feature type="binding site" description="in other chain" evidence="1">
    <location>
        <position position="194"/>
    </location>
    <ligand>
        <name>IMP</name>
        <dbReference type="ChEBI" id="CHEBI:58053"/>
        <note>ligand shared between dimeric partners</note>
    </ligand>
</feature>
<feature type="binding site" evidence="1">
    <location>
        <begin position="252"/>
        <end position="258"/>
    </location>
    <ligand>
        <name>substrate</name>
    </ligand>
</feature>
<feature type="binding site" description="in other chain" evidence="1">
    <location>
        <position position="256"/>
    </location>
    <ligand>
        <name>IMP</name>
        <dbReference type="ChEBI" id="CHEBI:58053"/>
        <note>ligand shared between dimeric partners</note>
    </ligand>
</feature>
<feature type="binding site" evidence="1">
    <location>
        <position position="258"/>
    </location>
    <ligand>
        <name>GTP</name>
        <dbReference type="ChEBI" id="CHEBI:37565"/>
    </ligand>
</feature>
<feature type="binding site" evidence="1">
    <location>
        <begin position="284"/>
        <end position="286"/>
    </location>
    <ligand>
        <name>GTP</name>
        <dbReference type="ChEBI" id="CHEBI:37565"/>
    </ligand>
</feature>
<feature type="binding site" evidence="1">
    <location>
        <begin position="324"/>
        <end position="326"/>
    </location>
    <ligand>
        <name>GTP</name>
        <dbReference type="ChEBI" id="CHEBI:37565"/>
    </ligand>
</feature>
<feature type="sequence conflict" description="In Ref. 1." evidence="3" ref="1">
    <original>TASSVAADVGIGP</original>
    <variation>CLFDSCGCGNRA</variation>
    <location>
        <begin position="199"/>
        <end position="211"/>
    </location>
</feature>
<reference key="1">
    <citation type="journal article" date="1996" name="J. Mol. Biol.">
        <title>The adenylosuccinate synthetase from the hyperthermophilic archaeon Pyrococcus species displays unusual structural features.</title>
        <authorList>
            <person name="Bouyoub A."/>
            <person name="Barbier G."/>
            <person name="Forterre P."/>
            <person name="Labedan B."/>
        </authorList>
    </citation>
    <scope>NUCLEOTIDE SEQUENCE [GENOMIC DNA]</scope>
    <scope>FUNCTION</scope>
</reference>
<reference key="2">
    <citation type="unpublished observations" date="1999-02">
        <authorList>
            <person name="Ferro S."/>
        </authorList>
    </citation>
    <scope>IDENTIFICATION OF PROBABLE FRAMESHIFT</scope>
</reference>
<sequence length="339" mass="37215">MPSMIVVGGQWGDEGKGSIIAYLALHDEPEIIARGGVGTNAGHSVFINGKKYAVRQLPTGFMQRKARLLVGAGVLVDPEVFFHELEHLKDFNVKERVGIDYRCAIIEPKHKELDRSNGYLHGKIGTTGSGCGPANADRVMRKAKQAKDIKELEPYLTDVAAEVNDALDEGALVLVEGTQGFGLSLYYGTYPYVTSKDVTASSVAADVGIGPTRVDEVIVVFKSFPTRVGAGPFPTEMPMEEADRLGLVEYGTVTGRRRRVGWFDFEMARYSARVNGATMLAVTMLDKYDKEAFGVTDYDKLPRKAKEFIEEIEEKVGVPVGLIKTGPELEHIIDRRDTI</sequence>
<dbReference type="EC" id="6.3.4.4" evidence="1"/>
<dbReference type="EMBL" id="X94001">
    <property type="protein sequence ID" value="CAA63823.1"/>
    <property type="molecule type" value="Genomic_DNA"/>
</dbReference>
<dbReference type="PIR" id="S72276">
    <property type="entry name" value="S72276"/>
</dbReference>
<dbReference type="SMR" id="Q59726"/>
<dbReference type="BRENDA" id="6.3.4.4">
    <property type="organism ID" value="5027"/>
</dbReference>
<dbReference type="UniPathway" id="UPA00075">
    <property type="reaction ID" value="UER00335"/>
</dbReference>
<dbReference type="GO" id="GO:0005737">
    <property type="term" value="C:cytoplasm"/>
    <property type="evidence" value="ECO:0007669"/>
    <property type="project" value="UniProtKB-SubCell"/>
</dbReference>
<dbReference type="GO" id="GO:0004019">
    <property type="term" value="F:adenylosuccinate synthase activity"/>
    <property type="evidence" value="ECO:0007669"/>
    <property type="project" value="UniProtKB-UniRule"/>
</dbReference>
<dbReference type="GO" id="GO:0005525">
    <property type="term" value="F:GTP binding"/>
    <property type="evidence" value="ECO:0007669"/>
    <property type="project" value="UniProtKB-UniRule"/>
</dbReference>
<dbReference type="GO" id="GO:0000287">
    <property type="term" value="F:magnesium ion binding"/>
    <property type="evidence" value="ECO:0007669"/>
    <property type="project" value="UniProtKB-UniRule"/>
</dbReference>
<dbReference type="GO" id="GO:0044208">
    <property type="term" value="P:'de novo' AMP biosynthetic process"/>
    <property type="evidence" value="ECO:0007669"/>
    <property type="project" value="UniProtKB-UniRule"/>
</dbReference>
<dbReference type="GO" id="GO:0046040">
    <property type="term" value="P:IMP metabolic process"/>
    <property type="evidence" value="ECO:0007669"/>
    <property type="project" value="TreeGrafter"/>
</dbReference>
<dbReference type="CDD" id="cd03108">
    <property type="entry name" value="AdSS"/>
    <property type="match status" value="1"/>
</dbReference>
<dbReference type="FunFam" id="3.40.440.10:FF:000005">
    <property type="entry name" value="Adenylosuccinate synthetase"/>
    <property type="match status" value="1"/>
</dbReference>
<dbReference type="FunFam" id="3.40.440.10:FF:000007">
    <property type="entry name" value="Adenylosuccinate synthetase"/>
    <property type="match status" value="1"/>
</dbReference>
<dbReference type="FunFam" id="3.90.170.10:FF:000002">
    <property type="entry name" value="Adenylosuccinate synthetase"/>
    <property type="match status" value="1"/>
</dbReference>
<dbReference type="Gene3D" id="3.40.440.10">
    <property type="entry name" value="Adenylosuccinate Synthetase, subunit A, domain 1"/>
    <property type="match status" value="2"/>
</dbReference>
<dbReference type="Gene3D" id="1.10.300.10">
    <property type="entry name" value="Adenylosuccinate Synthetase, subunit A, domain 2"/>
    <property type="match status" value="2"/>
</dbReference>
<dbReference type="Gene3D" id="3.90.170.10">
    <property type="entry name" value="Adenylosuccinate Synthetase, subunit A, domain 3"/>
    <property type="match status" value="2"/>
</dbReference>
<dbReference type="HAMAP" id="MF_00011">
    <property type="entry name" value="Adenylosucc_synth"/>
    <property type="match status" value="1"/>
</dbReference>
<dbReference type="InterPro" id="IPR018220">
    <property type="entry name" value="Adenylosuccin_syn_GTP-bd"/>
</dbReference>
<dbReference type="InterPro" id="IPR042109">
    <property type="entry name" value="Adenylosuccinate_synth_dom1"/>
</dbReference>
<dbReference type="InterPro" id="IPR042110">
    <property type="entry name" value="Adenylosuccinate_synth_dom2"/>
</dbReference>
<dbReference type="InterPro" id="IPR042111">
    <property type="entry name" value="Adenylosuccinate_synth_dom3"/>
</dbReference>
<dbReference type="InterPro" id="IPR001114">
    <property type="entry name" value="Adenylosuccinate_synthetase"/>
</dbReference>
<dbReference type="InterPro" id="IPR027417">
    <property type="entry name" value="P-loop_NTPase"/>
</dbReference>
<dbReference type="NCBIfam" id="NF003295">
    <property type="entry name" value="PRK04293.1"/>
    <property type="match status" value="1"/>
</dbReference>
<dbReference type="PANTHER" id="PTHR11846">
    <property type="entry name" value="ADENYLOSUCCINATE SYNTHETASE"/>
    <property type="match status" value="1"/>
</dbReference>
<dbReference type="PANTHER" id="PTHR11846:SF0">
    <property type="entry name" value="ADENYLOSUCCINATE SYNTHETASE"/>
    <property type="match status" value="1"/>
</dbReference>
<dbReference type="Pfam" id="PF00709">
    <property type="entry name" value="Adenylsucc_synt"/>
    <property type="match status" value="1"/>
</dbReference>
<dbReference type="SMART" id="SM00788">
    <property type="entry name" value="Adenylsucc_synt"/>
    <property type="match status" value="1"/>
</dbReference>
<dbReference type="SUPFAM" id="SSF52540">
    <property type="entry name" value="P-loop containing nucleoside triphosphate hydrolases"/>
    <property type="match status" value="1"/>
</dbReference>
<dbReference type="PROSITE" id="PS01266">
    <property type="entry name" value="ADENYLOSUCCIN_SYN_1"/>
    <property type="match status" value="1"/>
</dbReference>
<evidence type="ECO:0000255" key="1">
    <source>
        <dbReference type="HAMAP-Rule" id="MF_00011"/>
    </source>
</evidence>
<evidence type="ECO:0000269" key="2">
    <source>
    </source>
</evidence>
<evidence type="ECO:0000305" key="3"/>
<accession>Q59726</accession>
<proteinExistence type="inferred from homology"/>
<protein>
    <recommendedName>
        <fullName evidence="1">Adenylosuccinate synthetase</fullName>
        <shortName evidence="1">AMPSase</shortName>
        <shortName evidence="1">AdSS</shortName>
        <ecNumber evidence="1">6.3.4.4</ecNumber>
    </recommendedName>
    <alternativeName>
        <fullName evidence="1">IMP--aspartate ligase</fullName>
    </alternativeName>
</protein>